<comment type="subcellular location">
    <subcellularLocation>
        <location evidence="1">Cell inner membrane</location>
        <topology evidence="1">Multi-pass membrane protein</topology>
    </subcellularLocation>
</comment>
<comment type="similarity">
    <text evidence="1">Belongs to the UPF0208 family.</text>
</comment>
<proteinExistence type="inferred from homology"/>
<protein>
    <recommendedName>
        <fullName evidence="1">UPF0208 membrane protein YfbV</fullName>
    </recommendedName>
</protein>
<dbReference type="EMBL" id="CP000266">
    <property type="protein sequence ID" value="ABF04473.1"/>
    <property type="molecule type" value="Genomic_DNA"/>
</dbReference>
<dbReference type="RefSeq" id="WP_000106622.1">
    <property type="nucleotide sequence ID" value="NC_008258.1"/>
</dbReference>
<dbReference type="KEGG" id="sfv:SFV_2362"/>
<dbReference type="HOGENOM" id="CLU_128746_0_0_6"/>
<dbReference type="Proteomes" id="UP000000659">
    <property type="component" value="Chromosome"/>
</dbReference>
<dbReference type="GO" id="GO:0005886">
    <property type="term" value="C:plasma membrane"/>
    <property type="evidence" value="ECO:0007669"/>
    <property type="project" value="UniProtKB-SubCell"/>
</dbReference>
<dbReference type="HAMAP" id="MF_01101">
    <property type="entry name" value="UPF0208"/>
    <property type="match status" value="1"/>
</dbReference>
<dbReference type="InterPro" id="IPR007334">
    <property type="entry name" value="UPF0208"/>
</dbReference>
<dbReference type="NCBIfam" id="NF002493">
    <property type="entry name" value="PRK01816.1"/>
    <property type="match status" value="1"/>
</dbReference>
<dbReference type="Pfam" id="PF04217">
    <property type="entry name" value="DUF412"/>
    <property type="match status" value="1"/>
</dbReference>
<reference key="1">
    <citation type="journal article" date="2006" name="BMC Genomics">
        <title>Complete genome sequence of Shigella flexneri 5b and comparison with Shigella flexneri 2a.</title>
        <authorList>
            <person name="Nie H."/>
            <person name="Yang F."/>
            <person name="Zhang X."/>
            <person name="Yang J."/>
            <person name="Chen L."/>
            <person name="Wang J."/>
            <person name="Xiong Z."/>
            <person name="Peng J."/>
            <person name="Sun L."/>
            <person name="Dong J."/>
            <person name="Xue Y."/>
            <person name="Xu X."/>
            <person name="Chen S."/>
            <person name="Yao Z."/>
            <person name="Shen Y."/>
            <person name="Jin Q."/>
        </authorList>
    </citation>
    <scope>NUCLEOTIDE SEQUENCE [LARGE SCALE GENOMIC DNA]</scope>
    <source>
        <strain>8401</strain>
    </source>
</reference>
<name>YFBV_SHIF8</name>
<accession>Q0T2J2</accession>
<evidence type="ECO:0000255" key="1">
    <source>
        <dbReference type="HAMAP-Rule" id="MF_01101"/>
    </source>
</evidence>
<keyword id="KW-0997">Cell inner membrane</keyword>
<keyword id="KW-1003">Cell membrane</keyword>
<keyword id="KW-0472">Membrane</keyword>
<keyword id="KW-0812">Transmembrane</keyword>
<keyword id="KW-1133">Transmembrane helix</keyword>
<gene>
    <name evidence="1" type="primary">yfbV</name>
    <name type="ordered locus">SFV_2362</name>
</gene>
<feature type="chain" id="PRO_1000064981" description="UPF0208 membrane protein YfbV">
    <location>
        <begin position="1"/>
        <end position="151"/>
    </location>
</feature>
<feature type="transmembrane region" description="Helical" evidence="1">
    <location>
        <begin position="46"/>
        <end position="65"/>
    </location>
</feature>
<feature type="transmembrane region" description="Helical" evidence="1">
    <location>
        <begin position="69"/>
        <end position="91"/>
    </location>
</feature>
<sequence length="151" mass="17198">MSTPDNRSVNFFSLFRRGQHYSKTWPLEKRLAPVFVENRVIKMTRYAIRFMPPIAVFTLCWQIALGGLLGPAVATALFALSLPMQGLWWLGKRSVTPLPPAILNWFYEVRGKLQESGQVLAPVEGKPDYQALADTLKRAFKQLDKTFLDDL</sequence>
<organism>
    <name type="scientific">Shigella flexneri serotype 5b (strain 8401)</name>
    <dbReference type="NCBI Taxonomy" id="373384"/>
    <lineage>
        <taxon>Bacteria</taxon>
        <taxon>Pseudomonadati</taxon>
        <taxon>Pseudomonadota</taxon>
        <taxon>Gammaproteobacteria</taxon>
        <taxon>Enterobacterales</taxon>
        <taxon>Enterobacteriaceae</taxon>
        <taxon>Shigella</taxon>
    </lineage>
</organism>